<evidence type="ECO:0000255" key="1">
    <source>
        <dbReference type="HAMAP-Rule" id="MF_03059"/>
    </source>
</evidence>
<evidence type="ECO:0000256" key="2">
    <source>
        <dbReference type="SAM" id="MobiDB-lite"/>
    </source>
</evidence>
<name>RRF2M_PICGU</name>
<keyword id="KW-0342">GTP-binding</keyword>
<keyword id="KW-0496">Mitochondrion</keyword>
<keyword id="KW-0547">Nucleotide-binding</keyword>
<keyword id="KW-0648">Protein biosynthesis</keyword>
<keyword id="KW-1185">Reference proteome</keyword>
<keyword id="KW-0809">Transit peptide</keyword>
<accession>A5DB27</accession>
<gene>
    <name evidence="1" type="primary">MEF2</name>
    <name type="ORF">PGUG_00482</name>
</gene>
<reference key="1">
    <citation type="journal article" date="2009" name="Nature">
        <title>Evolution of pathogenicity and sexual reproduction in eight Candida genomes.</title>
        <authorList>
            <person name="Butler G."/>
            <person name="Rasmussen M.D."/>
            <person name="Lin M.F."/>
            <person name="Santos M.A.S."/>
            <person name="Sakthikumar S."/>
            <person name="Munro C.A."/>
            <person name="Rheinbay E."/>
            <person name="Grabherr M."/>
            <person name="Forche A."/>
            <person name="Reedy J.L."/>
            <person name="Agrafioti I."/>
            <person name="Arnaud M.B."/>
            <person name="Bates S."/>
            <person name="Brown A.J.P."/>
            <person name="Brunke S."/>
            <person name="Costanzo M.C."/>
            <person name="Fitzpatrick D.A."/>
            <person name="de Groot P.W.J."/>
            <person name="Harris D."/>
            <person name="Hoyer L.L."/>
            <person name="Hube B."/>
            <person name="Klis F.M."/>
            <person name="Kodira C."/>
            <person name="Lennard N."/>
            <person name="Logue M.E."/>
            <person name="Martin R."/>
            <person name="Neiman A.M."/>
            <person name="Nikolaou E."/>
            <person name="Quail M.A."/>
            <person name="Quinn J."/>
            <person name="Santos M.C."/>
            <person name="Schmitzberger F.F."/>
            <person name="Sherlock G."/>
            <person name="Shah P."/>
            <person name="Silverstein K.A.T."/>
            <person name="Skrzypek M.S."/>
            <person name="Soll D."/>
            <person name="Staggs R."/>
            <person name="Stansfield I."/>
            <person name="Stumpf M.P.H."/>
            <person name="Sudbery P.E."/>
            <person name="Srikantha T."/>
            <person name="Zeng Q."/>
            <person name="Berman J."/>
            <person name="Berriman M."/>
            <person name="Heitman J."/>
            <person name="Gow N.A.R."/>
            <person name="Lorenz M.C."/>
            <person name="Birren B.W."/>
            <person name="Kellis M."/>
            <person name="Cuomo C.A."/>
        </authorList>
    </citation>
    <scope>NUCLEOTIDE SEQUENCE [LARGE SCALE GENOMIC DNA]</scope>
    <source>
        <strain>ATCC 6260 / CBS 566 / DSM 6381 / JCM 1539 / NBRC 10279 / NRRL Y-324</strain>
    </source>
</reference>
<proteinExistence type="inferred from homology"/>
<sequence length="837" mass="92327">MFSINARTKVPIWVPFIARKGFSMSTRQLAEPKLNQVSSLNTRNIGIIAHIDAGKTTTTERMLFYSGKTTTMGDVDQGDTVTDYLPSERSRGITIQSAAITIPWNNNKINIIDTPGHADFTFEVIRSLRVLDGCVTILDAVAGVEAQTEKVWKQAQALKIPRIAFVNKMDRPGAGFSRTVKEVVQKLQTKVVLCNIPYFEMSKDDAVFVGVIDILHNKILKWNIDEDPNGRDITVIDLQEAKESHQEAYMEALKCRESMVETLGGIEETVVDAFLECDEDYMKIPSSILKSAIRKACISNQVTPVFCGSAFRKIAVQPLLDGVVDYLPSPLQTPVPEITASTSKVSKKQKQKKNSKVSSVPIEMNPKKGLIVNKNPQLTVALAFKVMTHATRGVMTFFRVYSGSLTSNTTVVNTRTGKKLHLNKVLLMHGDTPEPVSQISSGNIGVITGTENDVITGDTLVSHGPVKRNFTDLETSIKLLPIEIPPPLFNSSIEPLTAGDARYMNECINTLIREDPSLNVNVDEELGQTILSGMGELHLEIVRDRLINDMKAKIRLRNVAVSFKETVSKPSLEVVKASKNDGLVKVEVSLEAIDGPAEESTHADENGSVLLETDNNVVKLPPEAAASHINESLSERRWKSEHSLEELNDIILQGITTGLQLGGPILGLPLHSVVVRVIHWDFPVEGKEVSASMLLDASRQVVREALSKLPESSFCILEPIMSTRVYVDSGSMGEVVHDLSHRCSAHITSIEDESENMDSNAWANEEAENLYLPQDYTMKSGKNAVNFTNKKVVVAETPLRDMVGYLSKLRSITQGRGVFDMTYLGMRRAIRPVLLDS</sequence>
<feature type="transit peptide" description="Mitochondrion" evidence="1">
    <location>
        <begin position="1"/>
        <end position="29"/>
    </location>
</feature>
<feature type="chain" id="PRO_0000385619" description="Ribosome-releasing factor 2, mitochondrial">
    <location>
        <begin position="30"/>
        <end position="837"/>
    </location>
</feature>
<feature type="domain" description="tr-type G">
    <location>
        <begin position="40"/>
        <end position="331"/>
    </location>
</feature>
<feature type="region of interest" description="Disordered" evidence="2">
    <location>
        <begin position="338"/>
        <end position="359"/>
    </location>
</feature>
<feature type="compositionally biased region" description="Basic residues" evidence="2">
    <location>
        <begin position="345"/>
        <end position="355"/>
    </location>
</feature>
<feature type="binding site" evidence="1">
    <location>
        <begin position="49"/>
        <end position="56"/>
    </location>
    <ligand>
        <name>GTP</name>
        <dbReference type="ChEBI" id="CHEBI:37565"/>
    </ligand>
</feature>
<feature type="binding site" evidence="1">
    <location>
        <begin position="113"/>
        <end position="117"/>
    </location>
    <ligand>
        <name>GTP</name>
        <dbReference type="ChEBI" id="CHEBI:37565"/>
    </ligand>
</feature>
<feature type="binding site" evidence="1">
    <location>
        <begin position="167"/>
        <end position="170"/>
    </location>
    <ligand>
        <name>GTP</name>
        <dbReference type="ChEBI" id="CHEBI:37565"/>
    </ligand>
</feature>
<comment type="function">
    <text evidence="1">Mitochondrial GTPase that mediates the disassembly of ribosomes from messenger RNA at the termination of mitochondrial protein biosynthesis. Not involved in the GTP-dependent ribosomal translocation step during translation elongation.</text>
</comment>
<comment type="subcellular location">
    <subcellularLocation>
        <location evidence="1">Mitochondrion</location>
    </subcellularLocation>
</comment>
<comment type="similarity">
    <text evidence="1">Belongs to the TRAFAC class translation factor GTPase superfamily. Classic translation factor GTPase family. EF-G/EF-2 subfamily.</text>
</comment>
<dbReference type="EMBL" id="CH408155">
    <property type="protein sequence ID" value="EDK36384.2"/>
    <property type="molecule type" value="Genomic_DNA"/>
</dbReference>
<dbReference type="RefSeq" id="XP_001487105.1">
    <property type="nucleotide sequence ID" value="XM_001487055.1"/>
</dbReference>
<dbReference type="SMR" id="A5DB27"/>
<dbReference type="FunCoup" id="A5DB27">
    <property type="interactions" value="584"/>
</dbReference>
<dbReference type="STRING" id="294746.A5DB27"/>
<dbReference type="GeneID" id="5129600"/>
<dbReference type="KEGG" id="pgu:PGUG_00482"/>
<dbReference type="VEuPathDB" id="FungiDB:PGUG_00482"/>
<dbReference type="eggNOG" id="KOG0465">
    <property type="taxonomic scope" value="Eukaryota"/>
</dbReference>
<dbReference type="HOGENOM" id="CLU_002794_4_1_1"/>
<dbReference type="InParanoid" id="A5DB27"/>
<dbReference type="OMA" id="GPQFTFP"/>
<dbReference type="OrthoDB" id="198619at2759"/>
<dbReference type="Proteomes" id="UP000001997">
    <property type="component" value="Unassembled WGS sequence"/>
</dbReference>
<dbReference type="GO" id="GO:0005739">
    <property type="term" value="C:mitochondrion"/>
    <property type="evidence" value="ECO:0007669"/>
    <property type="project" value="UniProtKB-SubCell"/>
</dbReference>
<dbReference type="GO" id="GO:0005525">
    <property type="term" value="F:GTP binding"/>
    <property type="evidence" value="ECO:0007669"/>
    <property type="project" value="UniProtKB-UniRule"/>
</dbReference>
<dbReference type="GO" id="GO:0003924">
    <property type="term" value="F:GTPase activity"/>
    <property type="evidence" value="ECO:0007669"/>
    <property type="project" value="UniProtKB-UniRule"/>
</dbReference>
<dbReference type="GO" id="GO:0000002">
    <property type="term" value="P:mitochondrial genome maintenance"/>
    <property type="evidence" value="ECO:0007669"/>
    <property type="project" value="EnsemblFungi"/>
</dbReference>
<dbReference type="GO" id="GO:0032543">
    <property type="term" value="P:mitochondrial translation"/>
    <property type="evidence" value="ECO:0007669"/>
    <property type="project" value="UniProtKB-UniRule"/>
</dbReference>
<dbReference type="GO" id="GO:0051881">
    <property type="term" value="P:regulation of mitochondrial membrane potential"/>
    <property type="evidence" value="ECO:0007669"/>
    <property type="project" value="EnsemblFungi"/>
</dbReference>
<dbReference type="GO" id="GO:0032790">
    <property type="term" value="P:ribosome disassembly"/>
    <property type="evidence" value="ECO:0007669"/>
    <property type="project" value="UniProtKB-UniRule"/>
</dbReference>
<dbReference type="CDD" id="cd01886">
    <property type="entry name" value="EF-G"/>
    <property type="match status" value="1"/>
</dbReference>
<dbReference type="CDD" id="cd16262">
    <property type="entry name" value="EFG_III"/>
    <property type="match status" value="1"/>
</dbReference>
<dbReference type="CDD" id="cd03713">
    <property type="entry name" value="EFG_mtEFG_C"/>
    <property type="match status" value="1"/>
</dbReference>
<dbReference type="FunFam" id="3.40.50.300:FF:000514">
    <property type="entry name" value="Ribosome-releasing factor 2, mitochondrial"/>
    <property type="match status" value="1"/>
</dbReference>
<dbReference type="Gene3D" id="3.30.70.240">
    <property type="match status" value="1"/>
</dbReference>
<dbReference type="Gene3D" id="3.30.70.870">
    <property type="entry name" value="Elongation Factor G (Translational Gtpase), domain 3"/>
    <property type="match status" value="1"/>
</dbReference>
<dbReference type="Gene3D" id="3.40.50.300">
    <property type="entry name" value="P-loop containing nucleotide triphosphate hydrolases"/>
    <property type="match status" value="1"/>
</dbReference>
<dbReference type="Gene3D" id="2.40.30.10">
    <property type="entry name" value="Translation factors"/>
    <property type="match status" value="1"/>
</dbReference>
<dbReference type="HAMAP" id="MF_03059">
    <property type="entry name" value="mEF_G_2"/>
    <property type="match status" value="1"/>
</dbReference>
<dbReference type="InterPro" id="IPR053905">
    <property type="entry name" value="EF-G-like_DII"/>
</dbReference>
<dbReference type="InterPro" id="IPR030851">
    <property type="entry name" value="EFG2"/>
</dbReference>
<dbReference type="InterPro" id="IPR041095">
    <property type="entry name" value="EFG_II"/>
</dbReference>
<dbReference type="InterPro" id="IPR009022">
    <property type="entry name" value="EFG_III"/>
</dbReference>
<dbReference type="InterPro" id="IPR035647">
    <property type="entry name" value="EFG_III/V"/>
</dbReference>
<dbReference type="InterPro" id="IPR035649">
    <property type="entry name" value="EFG_V"/>
</dbReference>
<dbReference type="InterPro" id="IPR000640">
    <property type="entry name" value="EFG_V-like"/>
</dbReference>
<dbReference type="InterPro" id="IPR031157">
    <property type="entry name" value="G_TR_CS"/>
</dbReference>
<dbReference type="InterPro" id="IPR027417">
    <property type="entry name" value="P-loop_NTPase"/>
</dbReference>
<dbReference type="InterPro" id="IPR005225">
    <property type="entry name" value="Small_GTP-bd"/>
</dbReference>
<dbReference type="InterPro" id="IPR000795">
    <property type="entry name" value="T_Tr_GTP-bd_dom"/>
</dbReference>
<dbReference type="InterPro" id="IPR009000">
    <property type="entry name" value="Transl_B-barrel_sf"/>
</dbReference>
<dbReference type="NCBIfam" id="TIGR00231">
    <property type="entry name" value="small_GTP"/>
    <property type="match status" value="1"/>
</dbReference>
<dbReference type="PANTHER" id="PTHR43261:SF1">
    <property type="entry name" value="RIBOSOME-RELEASING FACTOR 2, MITOCHONDRIAL"/>
    <property type="match status" value="1"/>
</dbReference>
<dbReference type="PANTHER" id="PTHR43261">
    <property type="entry name" value="TRANSLATION ELONGATION FACTOR G-RELATED"/>
    <property type="match status" value="1"/>
</dbReference>
<dbReference type="Pfam" id="PF22042">
    <property type="entry name" value="EF-G_D2"/>
    <property type="match status" value="1"/>
</dbReference>
<dbReference type="Pfam" id="PF00679">
    <property type="entry name" value="EFG_C"/>
    <property type="match status" value="1"/>
</dbReference>
<dbReference type="Pfam" id="PF14492">
    <property type="entry name" value="EFG_III"/>
    <property type="match status" value="1"/>
</dbReference>
<dbReference type="Pfam" id="PF00009">
    <property type="entry name" value="GTP_EFTU"/>
    <property type="match status" value="1"/>
</dbReference>
<dbReference type="PRINTS" id="PR00315">
    <property type="entry name" value="ELONGATNFCT"/>
</dbReference>
<dbReference type="SMART" id="SM00838">
    <property type="entry name" value="EFG_C"/>
    <property type="match status" value="1"/>
</dbReference>
<dbReference type="SUPFAM" id="SSF54980">
    <property type="entry name" value="EF-G C-terminal domain-like"/>
    <property type="match status" value="2"/>
</dbReference>
<dbReference type="SUPFAM" id="SSF52540">
    <property type="entry name" value="P-loop containing nucleoside triphosphate hydrolases"/>
    <property type="match status" value="1"/>
</dbReference>
<dbReference type="SUPFAM" id="SSF50447">
    <property type="entry name" value="Translation proteins"/>
    <property type="match status" value="1"/>
</dbReference>
<dbReference type="PROSITE" id="PS00301">
    <property type="entry name" value="G_TR_1"/>
    <property type="match status" value="1"/>
</dbReference>
<dbReference type="PROSITE" id="PS51722">
    <property type="entry name" value="G_TR_2"/>
    <property type="match status" value="1"/>
</dbReference>
<organism>
    <name type="scientific">Meyerozyma guilliermondii (strain ATCC 6260 / CBS 566 / DSM 6381 / JCM 1539 / NBRC 10279 / NRRL Y-324)</name>
    <name type="common">Yeast</name>
    <name type="synonym">Candida guilliermondii</name>
    <dbReference type="NCBI Taxonomy" id="294746"/>
    <lineage>
        <taxon>Eukaryota</taxon>
        <taxon>Fungi</taxon>
        <taxon>Dikarya</taxon>
        <taxon>Ascomycota</taxon>
        <taxon>Saccharomycotina</taxon>
        <taxon>Pichiomycetes</taxon>
        <taxon>Debaryomycetaceae</taxon>
        <taxon>Meyerozyma</taxon>
    </lineage>
</organism>
<protein>
    <recommendedName>
        <fullName evidence="1">Ribosome-releasing factor 2, mitochondrial</fullName>
        <shortName evidence="1">RRF2mt</shortName>
    </recommendedName>
    <alternativeName>
        <fullName evidence="1">Elongation factor G 2, mitochondrial</fullName>
        <shortName evidence="1">EF-G2mt</shortName>
        <shortName evidence="1">mEF-G 2</shortName>
    </alternativeName>
</protein>